<gene>
    <name evidence="1" type="primary">glyQ</name>
    <name type="ordered locus">PSEEN0017</name>
</gene>
<evidence type="ECO:0000255" key="1">
    <source>
        <dbReference type="HAMAP-Rule" id="MF_00254"/>
    </source>
</evidence>
<name>SYGA_PSEE4</name>
<comment type="catalytic activity">
    <reaction evidence="1">
        <text>tRNA(Gly) + glycine + ATP = glycyl-tRNA(Gly) + AMP + diphosphate</text>
        <dbReference type="Rhea" id="RHEA:16013"/>
        <dbReference type="Rhea" id="RHEA-COMP:9664"/>
        <dbReference type="Rhea" id="RHEA-COMP:9683"/>
        <dbReference type="ChEBI" id="CHEBI:30616"/>
        <dbReference type="ChEBI" id="CHEBI:33019"/>
        <dbReference type="ChEBI" id="CHEBI:57305"/>
        <dbReference type="ChEBI" id="CHEBI:78442"/>
        <dbReference type="ChEBI" id="CHEBI:78522"/>
        <dbReference type="ChEBI" id="CHEBI:456215"/>
        <dbReference type="EC" id="6.1.1.14"/>
    </reaction>
</comment>
<comment type="subunit">
    <text evidence="1">Tetramer of two alpha and two beta subunits.</text>
</comment>
<comment type="subcellular location">
    <subcellularLocation>
        <location evidence="1">Cytoplasm</location>
    </subcellularLocation>
</comment>
<comment type="similarity">
    <text evidence="1">Belongs to the class-II aminoacyl-tRNA synthetase family.</text>
</comment>
<proteinExistence type="inferred from homology"/>
<feature type="chain" id="PRO_1000047469" description="Glycine--tRNA ligase alpha subunit">
    <location>
        <begin position="1"/>
        <end position="315"/>
    </location>
</feature>
<organism>
    <name type="scientific">Pseudomonas entomophila (strain L48)</name>
    <dbReference type="NCBI Taxonomy" id="384676"/>
    <lineage>
        <taxon>Bacteria</taxon>
        <taxon>Pseudomonadati</taxon>
        <taxon>Pseudomonadota</taxon>
        <taxon>Gammaproteobacteria</taxon>
        <taxon>Pseudomonadales</taxon>
        <taxon>Pseudomonadaceae</taxon>
        <taxon>Pseudomonas</taxon>
    </lineage>
</organism>
<keyword id="KW-0030">Aminoacyl-tRNA synthetase</keyword>
<keyword id="KW-0067">ATP-binding</keyword>
<keyword id="KW-0963">Cytoplasm</keyword>
<keyword id="KW-0436">Ligase</keyword>
<keyword id="KW-0547">Nucleotide-binding</keyword>
<keyword id="KW-0648">Protein biosynthesis</keyword>
<reference key="1">
    <citation type="journal article" date="2006" name="Nat. Biotechnol.">
        <title>Complete genome sequence of the entomopathogenic and metabolically versatile soil bacterium Pseudomonas entomophila.</title>
        <authorList>
            <person name="Vodovar N."/>
            <person name="Vallenet D."/>
            <person name="Cruveiller S."/>
            <person name="Rouy Z."/>
            <person name="Barbe V."/>
            <person name="Acosta C."/>
            <person name="Cattolico L."/>
            <person name="Jubin C."/>
            <person name="Lajus A."/>
            <person name="Segurens B."/>
            <person name="Vacherie B."/>
            <person name="Wincker P."/>
            <person name="Weissenbach J."/>
            <person name="Lemaitre B."/>
            <person name="Medigue C."/>
            <person name="Boccard F."/>
        </authorList>
    </citation>
    <scope>NUCLEOTIDE SEQUENCE [LARGE SCALE GENOMIC DNA]</scope>
    <source>
        <strain>L48</strain>
    </source>
</reference>
<dbReference type="EC" id="6.1.1.14" evidence="1"/>
<dbReference type="EMBL" id="CT573326">
    <property type="protein sequence ID" value="CAK13012.1"/>
    <property type="molecule type" value="Genomic_DNA"/>
</dbReference>
<dbReference type="RefSeq" id="WP_011531473.1">
    <property type="nucleotide sequence ID" value="NC_008027.1"/>
</dbReference>
<dbReference type="SMR" id="Q1IH41"/>
<dbReference type="STRING" id="384676.PSEEN0017"/>
<dbReference type="GeneID" id="32803386"/>
<dbReference type="KEGG" id="pen:PSEEN0017"/>
<dbReference type="eggNOG" id="COG0752">
    <property type="taxonomic scope" value="Bacteria"/>
</dbReference>
<dbReference type="HOGENOM" id="CLU_057066_1_0_6"/>
<dbReference type="OrthoDB" id="9802183at2"/>
<dbReference type="Proteomes" id="UP000000658">
    <property type="component" value="Chromosome"/>
</dbReference>
<dbReference type="GO" id="GO:0005829">
    <property type="term" value="C:cytosol"/>
    <property type="evidence" value="ECO:0007669"/>
    <property type="project" value="TreeGrafter"/>
</dbReference>
<dbReference type="GO" id="GO:0005524">
    <property type="term" value="F:ATP binding"/>
    <property type="evidence" value="ECO:0007669"/>
    <property type="project" value="UniProtKB-UniRule"/>
</dbReference>
<dbReference type="GO" id="GO:0004820">
    <property type="term" value="F:glycine-tRNA ligase activity"/>
    <property type="evidence" value="ECO:0007669"/>
    <property type="project" value="UniProtKB-UniRule"/>
</dbReference>
<dbReference type="GO" id="GO:0006426">
    <property type="term" value="P:glycyl-tRNA aminoacylation"/>
    <property type="evidence" value="ECO:0007669"/>
    <property type="project" value="UniProtKB-UniRule"/>
</dbReference>
<dbReference type="CDD" id="cd00733">
    <property type="entry name" value="GlyRS_alpha_core"/>
    <property type="match status" value="1"/>
</dbReference>
<dbReference type="FunFam" id="3.30.930.10:FF:000006">
    <property type="entry name" value="Glycine--tRNA ligase alpha subunit"/>
    <property type="match status" value="1"/>
</dbReference>
<dbReference type="Gene3D" id="3.30.930.10">
    <property type="entry name" value="Bira Bifunctional Protein, Domain 2"/>
    <property type="match status" value="1"/>
</dbReference>
<dbReference type="Gene3D" id="1.20.58.180">
    <property type="entry name" value="Class II aaRS and biotin synthetases, domain 2"/>
    <property type="match status" value="1"/>
</dbReference>
<dbReference type="HAMAP" id="MF_00254">
    <property type="entry name" value="Gly_tRNA_synth_alpha"/>
    <property type="match status" value="1"/>
</dbReference>
<dbReference type="InterPro" id="IPR045864">
    <property type="entry name" value="aa-tRNA-synth_II/BPL/LPL"/>
</dbReference>
<dbReference type="InterPro" id="IPR006194">
    <property type="entry name" value="Gly-tRNA-synth_heterodimer"/>
</dbReference>
<dbReference type="InterPro" id="IPR002310">
    <property type="entry name" value="Gly-tRNA_ligase_asu"/>
</dbReference>
<dbReference type="NCBIfam" id="TIGR00388">
    <property type="entry name" value="glyQ"/>
    <property type="match status" value="1"/>
</dbReference>
<dbReference type="NCBIfam" id="NF006827">
    <property type="entry name" value="PRK09348.1"/>
    <property type="match status" value="1"/>
</dbReference>
<dbReference type="PANTHER" id="PTHR30075:SF2">
    <property type="entry name" value="GLYCINE--TRNA LIGASE, CHLOROPLASTIC_MITOCHONDRIAL 2"/>
    <property type="match status" value="1"/>
</dbReference>
<dbReference type="PANTHER" id="PTHR30075">
    <property type="entry name" value="GLYCYL-TRNA SYNTHETASE"/>
    <property type="match status" value="1"/>
</dbReference>
<dbReference type="Pfam" id="PF02091">
    <property type="entry name" value="tRNA-synt_2e"/>
    <property type="match status" value="1"/>
</dbReference>
<dbReference type="PRINTS" id="PR01044">
    <property type="entry name" value="TRNASYNTHGA"/>
</dbReference>
<dbReference type="SUPFAM" id="SSF55681">
    <property type="entry name" value="Class II aaRS and biotin synthetases"/>
    <property type="match status" value="1"/>
</dbReference>
<dbReference type="PROSITE" id="PS50861">
    <property type="entry name" value="AA_TRNA_LIGASE_II_GLYAB"/>
    <property type="match status" value="1"/>
</dbReference>
<accession>Q1IH41</accession>
<protein>
    <recommendedName>
        <fullName evidence="1">Glycine--tRNA ligase alpha subunit</fullName>
        <ecNumber evidence="1">6.1.1.14</ecNumber>
    </recommendedName>
    <alternativeName>
        <fullName evidence="1">Glycyl-tRNA synthetase alpha subunit</fullName>
        <shortName evidence="1">GlyRS</shortName>
    </alternativeName>
</protein>
<sequence length="315" mass="36068">MSQPTPAVRTFQDLILALQNYWAEQGCVVLQPYDMEVGAGTFHTATFLRAVGPETWNAAYVQPSRRPADGRYGENPNRLQHYYQFQVVLKPNPANFQELYLGSLKAIGLDPLVHDIRFVEDNWESPTLGAWGLGWEIWLNGMEVTQFTYFQQVGGIECYPVTGEITYGLERLAMYLQGVDSVYDLVWADGPFGKVTYGDVFHQNEVEQSTYNFEHANVEKLFELFDFYESEANRLIKLDLPLPTYEMVLKASHTFNLLDARRAISVTERQRYILRVRTLARDVAQSYLQARARLGFPMASPELRDEVLAKLEAAQ</sequence>